<proteinExistence type="evidence at protein level"/>
<comment type="function">
    <text evidence="1 4">Subunit of NADPH oxidase complexes that is required for the NADPH oxidase activity that generates, in various cell types, superoxide from molecular oxygen utilizing NADPH as an electron donor (PubMed:15322091). Subunit of the phagocyte NADPH oxidase complex that mediates the transfer of electrons from cytosolic NADPH to O2 to produce the superoxide anion (O2(-)). In the activated complex, electrons are first transferred from NADPH to flavin adenine dinucleotide (FAD) and subsequently transferred via two heme molecules to molecular oxygen, producing superoxide through an outer-sphere reaction. Activation of the NADPH oxidase complex is initiated by the assembly of cytosolic subunits of the NADPH oxidase complex with the core NADPH oxidase complex to form a complex at the plasma membrane or phagosomal membrane. This activation process is initiated by phosphorylation dependent binding of the cytosolic NCF1/p47-phox subunit to the C-terminus of CYBA/p22-phox. Aassociates with NOX3 to form a functional NADPH oxidase constitutively generating superoxide (By similarity).</text>
</comment>
<comment type="subunit">
    <text evidence="1 2 4">Component of the phagocyte NADPH oxidase core complex/cytochrome b558 complex, composed of CYBB (heavy chain (beta)) and CYBA (light chain (alpha)) (PubMed:15322091). Component of the phagocyte NADPH oxidase complex composed of an obligatory core heterodimer formed by the membrane proteins CYBA and CYBB and the cytosolic regulatory subunits NCF1/p47-phox, NCF2/p67-phox, NCF4/p40-phox and the small GTPase RAC1 or RAC2. Interacts with NCF1 (via SH3 domain) (By similarity). Interacts with SH3PXD2A (By similarity). Interacts with DUOX1, DUOX2 and TPO. Interacts with NOX4; this interaction mediates superoxide generation (PubMed:15322091). Interacts with calprotectin (S100A8/9) (By similarity). Interacts with GBP7 (By similarity). Interacts with NOXO1 (By similarity). Forms a heterodimer with NOX3 and is essential for activity and cell membrane localization of NOX3 (By similarity). Interacts with NOX1 (PubMed:15322091).</text>
</comment>
<comment type="subcellular location">
    <subcellularLocation>
        <location evidence="1">Cell membrane</location>
        <topology evidence="1">Multi-pass membrane protein</topology>
    </subcellularLocation>
</comment>
<comment type="tissue specificity">
    <text evidence="5">Expressed to a relatively high level in kidney, spleen, thymus and lung, and to a lower level in aorta, adrenals, and heart (PubMed:7578211). Expression is not detected in liver or brain (PubMed:7578211).</text>
</comment>
<comment type="PTM">
    <text evidence="1">Phosphorylation at Thr-147 enhances NADPH oxidase activity by promoting NCF1/p47-phox binding.</text>
</comment>
<comment type="PTM">
    <text evidence="2">Ubiquitinated at Lys-149 likely by RNF145.</text>
</comment>
<comment type="similarity">
    <text evidence="6">Belongs to the p22phox family.</text>
</comment>
<reference key="1">
    <citation type="journal article" date="1995" name="Biochim. Biophys. Acta">
        <title>Cytochrome b-558 alpha-subunit cloning and expression in rat aortic smooth muscle cells.</title>
        <authorList>
            <person name="Fukui T."/>
            <person name="Lassegue B."/>
            <person name="Kai H."/>
            <person name="Alexander R.W."/>
            <person name="Griendling K.K."/>
        </authorList>
    </citation>
    <scope>NUCLEOTIDE SEQUENCE [MRNA]</scope>
    <scope>TISSUE SPECIFICITY</scope>
    <source>
        <strain>Sprague-Dawley</strain>
        <tissue>Vascular smooth muscle</tissue>
    </source>
</reference>
<reference key="2">
    <citation type="journal article" date="2000" name="Arterioscler. Thromb. Vasc. Biol.">
        <title>Molecular characterization and localization of the NAD(P)H oxidase components gp91-phox and p22-phox in endothelial cells.</title>
        <authorList>
            <person name="Bayraktutan U."/>
            <person name="Blayney L."/>
            <person name="Shah A.M."/>
        </authorList>
    </citation>
    <scope>NUCLEOTIDE SEQUENCE [MRNA]</scope>
    <source>
        <tissue>Coronary artery</tissue>
    </source>
</reference>
<reference key="3">
    <citation type="journal article" date="2004" name="J. Biol. Chem.">
        <title>Direct interaction of the novel Nox proteins with p22phox is required for the formation of a functionally active NADPH oxidase.</title>
        <authorList>
            <person name="Ambasta R.K."/>
            <person name="Kumar P."/>
            <person name="Griendling K.K."/>
            <person name="Schmidt H.H.H.W."/>
            <person name="Busse R."/>
            <person name="Brandes R.P."/>
        </authorList>
    </citation>
    <scope>FUNCTION</scope>
    <scope>INTERACTION WITH NOX1; CYBB AND NOX4</scope>
</reference>
<reference key="4">
    <citation type="journal article" date="2012" name="Nat. Commun.">
        <title>Quantitative maps of protein phosphorylation sites across 14 different rat organs and tissues.</title>
        <authorList>
            <person name="Lundby A."/>
            <person name="Secher A."/>
            <person name="Lage K."/>
            <person name="Nordsborg N.B."/>
            <person name="Dmytriyev A."/>
            <person name="Lundby C."/>
            <person name="Olsen J.V."/>
        </authorList>
    </citation>
    <scope>PHOSPHORYLATION [LARGE SCALE ANALYSIS] AT SER-168 AND SER-176</scope>
    <scope>IDENTIFICATION BY MASS SPECTROMETRY [LARGE SCALE ANALYSIS]</scope>
</reference>
<dbReference type="EMBL" id="U18729">
    <property type="protein sequence ID" value="AAA85865.1"/>
    <property type="molecule type" value="mRNA"/>
</dbReference>
<dbReference type="EMBL" id="AJ295951">
    <property type="protein sequence ID" value="CAC09434.1"/>
    <property type="molecule type" value="mRNA"/>
</dbReference>
<dbReference type="RefSeq" id="NP_077074.1">
    <property type="nucleotide sequence ID" value="NM_024160.2"/>
</dbReference>
<dbReference type="SMR" id="Q62737"/>
<dbReference type="FunCoup" id="Q62737">
    <property type="interactions" value="828"/>
</dbReference>
<dbReference type="STRING" id="10116.ENSRNOP00000017564"/>
<dbReference type="iPTMnet" id="Q62737"/>
<dbReference type="PhosphoSitePlus" id="Q62737"/>
<dbReference type="SwissPalm" id="Q62737"/>
<dbReference type="PaxDb" id="10116-ENSRNOP00000017564"/>
<dbReference type="GeneID" id="79129"/>
<dbReference type="KEGG" id="rno:79129"/>
<dbReference type="UCSC" id="RGD:620573">
    <property type="organism name" value="rat"/>
</dbReference>
<dbReference type="AGR" id="RGD:620573"/>
<dbReference type="CTD" id="1535"/>
<dbReference type="RGD" id="620573">
    <property type="gene designation" value="Cyba"/>
</dbReference>
<dbReference type="VEuPathDB" id="HostDB:ENSRNOG00000013014"/>
<dbReference type="eggNOG" id="ENOG502QVK1">
    <property type="taxonomic scope" value="Eukaryota"/>
</dbReference>
<dbReference type="HOGENOM" id="CLU_125024_0_0_1"/>
<dbReference type="InParanoid" id="Q62737"/>
<dbReference type="OrthoDB" id="54374at9989"/>
<dbReference type="PhylomeDB" id="Q62737"/>
<dbReference type="Reactome" id="R-RNO-1222556">
    <property type="pathway name" value="ROS and RNS production in phagocytes"/>
</dbReference>
<dbReference type="Reactome" id="R-RNO-1236973">
    <property type="pathway name" value="Cross-presentation of particulate exogenous antigens (phagosomes)"/>
</dbReference>
<dbReference type="Reactome" id="R-RNO-3299685">
    <property type="pathway name" value="Detoxification of Reactive Oxygen Species"/>
</dbReference>
<dbReference type="Reactome" id="R-RNO-4420097">
    <property type="pathway name" value="VEGFA-VEGFR2 Pathway"/>
</dbReference>
<dbReference type="Reactome" id="R-RNO-5668599">
    <property type="pathway name" value="RHO GTPases Activate NADPH Oxidases"/>
</dbReference>
<dbReference type="Reactome" id="R-RNO-6798695">
    <property type="pathway name" value="Neutrophil degranulation"/>
</dbReference>
<dbReference type="Reactome" id="R-RNO-9013149">
    <property type="pathway name" value="RAC1 GTPase cycle"/>
</dbReference>
<dbReference type="Reactome" id="R-RNO-9013404">
    <property type="pathway name" value="RAC2 GTPase cycle"/>
</dbReference>
<dbReference type="PRO" id="PR:Q62737"/>
<dbReference type="Proteomes" id="UP000002494">
    <property type="component" value="Chromosome 19"/>
</dbReference>
<dbReference type="Bgee" id="ENSRNOG00000013014">
    <property type="expression patterns" value="Expressed in spleen and 18 other cell types or tissues"/>
</dbReference>
<dbReference type="GO" id="GO:0016324">
    <property type="term" value="C:apical plasma membrane"/>
    <property type="evidence" value="ECO:0000314"/>
    <property type="project" value="RGD"/>
</dbReference>
<dbReference type="GO" id="GO:0005737">
    <property type="term" value="C:cytoplasm"/>
    <property type="evidence" value="ECO:0000266"/>
    <property type="project" value="RGD"/>
</dbReference>
<dbReference type="GO" id="GO:0030425">
    <property type="term" value="C:dendrite"/>
    <property type="evidence" value="ECO:0000314"/>
    <property type="project" value="RGD"/>
</dbReference>
<dbReference type="GO" id="GO:0005768">
    <property type="term" value="C:endosome"/>
    <property type="evidence" value="ECO:0000266"/>
    <property type="project" value="RGD"/>
</dbReference>
<dbReference type="GO" id="GO:0005925">
    <property type="term" value="C:focal adhesion"/>
    <property type="evidence" value="ECO:0000314"/>
    <property type="project" value="RGD"/>
</dbReference>
<dbReference type="GO" id="GO:0043020">
    <property type="term" value="C:NADPH oxidase complex"/>
    <property type="evidence" value="ECO:0000314"/>
    <property type="project" value="RGD"/>
</dbReference>
<dbReference type="GO" id="GO:0043025">
    <property type="term" value="C:neuronal cell body"/>
    <property type="evidence" value="ECO:0000314"/>
    <property type="project" value="RGD"/>
</dbReference>
<dbReference type="GO" id="GO:0097038">
    <property type="term" value="C:perinuclear endoplasmic reticulum"/>
    <property type="evidence" value="ECO:0000314"/>
    <property type="project" value="RGD"/>
</dbReference>
<dbReference type="GO" id="GO:0005886">
    <property type="term" value="C:plasma membrane"/>
    <property type="evidence" value="ECO:0000266"/>
    <property type="project" value="RGD"/>
</dbReference>
<dbReference type="GO" id="GO:0001725">
    <property type="term" value="C:stress fiber"/>
    <property type="evidence" value="ECO:0000314"/>
    <property type="project" value="RGD"/>
</dbReference>
<dbReference type="GO" id="GO:0009055">
    <property type="term" value="F:electron transfer activity"/>
    <property type="evidence" value="ECO:0000266"/>
    <property type="project" value="RGD"/>
</dbReference>
<dbReference type="GO" id="GO:0020037">
    <property type="term" value="F:heme binding"/>
    <property type="evidence" value="ECO:0007669"/>
    <property type="project" value="InterPro"/>
</dbReference>
<dbReference type="GO" id="GO:0046872">
    <property type="term" value="F:metal ion binding"/>
    <property type="evidence" value="ECO:0007669"/>
    <property type="project" value="UniProtKB-KW"/>
</dbReference>
<dbReference type="GO" id="GO:0046982">
    <property type="term" value="F:protein heterodimerization activity"/>
    <property type="evidence" value="ECO:0000266"/>
    <property type="project" value="RGD"/>
</dbReference>
<dbReference type="GO" id="GO:0017124">
    <property type="term" value="F:SH3 domain binding"/>
    <property type="evidence" value="ECO:0000266"/>
    <property type="project" value="RGD"/>
</dbReference>
<dbReference type="GO" id="GO:0016175">
    <property type="term" value="F:superoxide-generating NAD(P)H oxidase activity"/>
    <property type="evidence" value="ECO:0007669"/>
    <property type="project" value="Ensembl"/>
</dbReference>
<dbReference type="GO" id="GO:1904385">
    <property type="term" value="P:cellular response to angiotensin"/>
    <property type="evidence" value="ECO:0000270"/>
    <property type="project" value="RGD"/>
</dbReference>
<dbReference type="GO" id="GO:0071480">
    <property type="term" value="P:cellular response to gamma radiation"/>
    <property type="evidence" value="ECO:0000270"/>
    <property type="project" value="RGD"/>
</dbReference>
<dbReference type="GO" id="GO:0071333">
    <property type="term" value="P:cellular response to glucose stimulus"/>
    <property type="evidence" value="ECO:0000270"/>
    <property type="project" value="RGD"/>
</dbReference>
<dbReference type="GO" id="GO:1904845">
    <property type="term" value="P:cellular response to L-glutamine"/>
    <property type="evidence" value="ECO:0000270"/>
    <property type="project" value="RGD"/>
</dbReference>
<dbReference type="GO" id="GO:0071260">
    <property type="term" value="P:cellular response to mechanical stimulus"/>
    <property type="evidence" value="ECO:0000270"/>
    <property type="project" value="RGD"/>
</dbReference>
<dbReference type="GO" id="GO:1904628">
    <property type="term" value="P:cellular response to phorbol 13-acetate 12-myristate"/>
    <property type="evidence" value="ECO:0000270"/>
    <property type="project" value="RGD"/>
</dbReference>
<dbReference type="GO" id="GO:0071356">
    <property type="term" value="P:cellular response to tumor necrosis factor"/>
    <property type="evidence" value="ECO:0000270"/>
    <property type="project" value="RGD"/>
</dbReference>
<dbReference type="GO" id="GO:0017004">
    <property type="term" value="P:cytochrome complex assembly"/>
    <property type="evidence" value="ECO:0000266"/>
    <property type="project" value="RGD"/>
</dbReference>
<dbReference type="GO" id="GO:0051649">
    <property type="term" value="P:establishment of localization in cell"/>
    <property type="evidence" value="ECO:0000266"/>
    <property type="project" value="RGD"/>
</dbReference>
<dbReference type="GO" id="GO:0050665">
    <property type="term" value="P:hydrogen peroxide biosynthetic process"/>
    <property type="evidence" value="ECO:0000315"/>
    <property type="project" value="BHF-UCL"/>
</dbReference>
<dbReference type="GO" id="GO:0006954">
    <property type="term" value="P:inflammatory response"/>
    <property type="evidence" value="ECO:0000266"/>
    <property type="project" value="RGD"/>
</dbReference>
<dbReference type="GO" id="GO:0045087">
    <property type="term" value="P:innate immune response"/>
    <property type="evidence" value="ECO:0000250"/>
    <property type="project" value="UniProtKB"/>
</dbReference>
<dbReference type="GO" id="GO:0070254">
    <property type="term" value="P:mucus secretion"/>
    <property type="evidence" value="ECO:0000266"/>
    <property type="project" value="RGD"/>
</dbReference>
<dbReference type="GO" id="GO:0003106">
    <property type="term" value="P:negative regulation of glomerular filtration by angiotensin"/>
    <property type="evidence" value="ECO:0000315"/>
    <property type="project" value="RGD"/>
</dbReference>
<dbReference type="GO" id="GO:0045777">
    <property type="term" value="P:positive regulation of blood pressure"/>
    <property type="evidence" value="ECO:0000315"/>
    <property type="project" value="RGD"/>
</dbReference>
<dbReference type="GO" id="GO:0030307">
    <property type="term" value="P:positive regulation of cell growth"/>
    <property type="evidence" value="ECO:0000315"/>
    <property type="project" value="RGD"/>
</dbReference>
<dbReference type="GO" id="GO:1900426">
    <property type="term" value="P:positive regulation of defense response to bacterium"/>
    <property type="evidence" value="ECO:0000266"/>
    <property type="project" value="RGD"/>
</dbReference>
<dbReference type="GO" id="GO:0001938">
    <property type="term" value="P:positive regulation of endothelial cell proliferation"/>
    <property type="evidence" value="ECO:0000315"/>
    <property type="project" value="RGD"/>
</dbReference>
<dbReference type="GO" id="GO:0032755">
    <property type="term" value="P:positive regulation of interleukin-6 production"/>
    <property type="evidence" value="ECO:0000266"/>
    <property type="project" value="RGD"/>
</dbReference>
<dbReference type="GO" id="GO:0070257">
    <property type="term" value="P:positive regulation of mucus secretion"/>
    <property type="evidence" value="ECO:0000266"/>
    <property type="project" value="RGD"/>
</dbReference>
<dbReference type="GO" id="GO:0050766">
    <property type="term" value="P:positive regulation of phagocytosis"/>
    <property type="evidence" value="ECO:0000266"/>
    <property type="project" value="RGD"/>
</dbReference>
<dbReference type="GO" id="GO:1903428">
    <property type="term" value="P:positive regulation of reactive oxygen species biosynthetic process"/>
    <property type="evidence" value="ECO:0000266"/>
    <property type="project" value="RGD"/>
</dbReference>
<dbReference type="GO" id="GO:0048661">
    <property type="term" value="P:positive regulation of smooth muscle cell proliferation"/>
    <property type="evidence" value="ECO:0000315"/>
    <property type="project" value="RGD"/>
</dbReference>
<dbReference type="GO" id="GO:0032930">
    <property type="term" value="P:positive regulation of superoxide anion generation"/>
    <property type="evidence" value="ECO:0000315"/>
    <property type="project" value="RGD"/>
</dbReference>
<dbReference type="GO" id="GO:0034137">
    <property type="term" value="P:positive regulation of toll-like receptor 2 signaling pathway"/>
    <property type="evidence" value="ECO:0000266"/>
    <property type="project" value="RGD"/>
</dbReference>
<dbReference type="GO" id="GO:0032760">
    <property type="term" value="P:positive regulation of tumor necrosis factor production"/>
    <property type="evidence" value="ECO:0000266"/>
    <property type="project" value="RGD"/>
</dbReference>
<dbReference type="GO" id="GO:0072593">
    <property type="term" value="P:reactive oxygen species metabolic process"/>
    <property type="evidence" value="ECO:0000266"/>
    <property type="project" value="RGD"/>
</dbReference>
<dbReference type="GO" id="GO:0051279">
    <property type="term" value="P:regulation of release of sequestered calcium ion into cytosol"/>
    <property type="evidence" value="ECO:0000266"/>
    <property type="project" value="RGD"/>
</dbReference>
<dbReference type="GO" id="GO:0045730">
    <property type="term" value="P:respiratory burst"/>
    <property type="evidence" value="ECO:0000266"/>
    <property type="project" value="RGD"/>
</dbReference>
<dbReference type="GO" id="GO:0014823">
    <property type="term" value="P:response to activity"/>
    <property type="evidence" value="ECO:0000270"/>
    <property type="project" value="RGD"/>
</dbReference>
<dbReference type="GO" id="GO:1904044">
    <property type="term" value="P:response to aldosterone"/>
    <property type="evidence" value="ECO:0000270"/>
    <property type="project" value="RGD"/>
</dbReference>
<dbReference type="GO" id="GO:0001666">
    <property type="term" value="P:response to hypoxia"/>
    <property type="evidence" value="ECO:0000270"/>
    <property type="project" value="RGD"/>
</dbReference>
<dbReference type="GO" id="GO:0070555">
    <property type="term" value="P:response to interleukin-1"/>
    <property type="evidence" value="ECO:0000270"/>
    <property type="project" value="RGD"/>
</dbReference>
<dbReference type="GO" id="GO:0031667">
    <property type="term" value="P:response to nutrient levels"/>
    <property type="evidence" value="ECO:0000270"/>
    <property type="project" value="RGD"/>
</dbReference>
<dbReference type="GO" id="GO:0009410">
    <property type="term" value="P:response to xenobiotic stimulus"/>
    <property type="evidence" value="ECO:0000270"/>
    <property type="project" value="RGD"/>
</dbReference>
<dbReference type="GO" id="GO:0014895">
    <property type="term" value="P:smooth muscle hypertrophy"/>
    <property type="evidence" value="ECO:0000315"/>
    <property type="project" value="BHF-UCL"/>
</dbReference>
<dbReference type="GO" id="GO:0042554">
    <property type="term" value="P:superoxide anion generation"/>
    <property type="evidence" value="ECO:0000315"/>
    <property type="project" value="BHF-UCL"/>
</dbReference>
<dbReference type="GO" id="GO:0006801">
    <property type="term" value="P:superoxide metabolic process"/>
    <property type="evidence" value="ECO:0000314"/>
    <property type="project" value="RGD"/>
</dbReference>
<dbReference type="InterPro" id="IPR007732">
    <property type="entry name" value="Cyt_b558_asu"/>
</dbReference>
<dbReference type="PANTHER" id="PTHR15168">
    <property type="entry name" value="CYTOCHROME B-245 LIGHT CHAIN"/>
    <property type="match status" value="1"/>
</dbReference>
<dbReference type="PANTHER" id="PTHR15168:SF0">
    <property type="entry name" value="CYTOCHROME B-245 LIGHT CHAIN"/>
    <property type="match status" value="1"/>
</dbReference>
<dbReference type="Pfam" id="PF05038">
    <property type="entry name" value="Cytochrom_B558a"/>
    <property type="match status" value="1"/>
</dbReference>
<dbReference type="PIRSF" id="PIRSF019635">
    <property type="entry name" value="Cytochr_b558a"/>
    <property type="match status" value="1"/>
</dbReference>
<organism>
    <name type="scientific">Rattus norvegicus</name>
    <name type="common">Rat</name>
    <dbReference type="NCBI Taxonomy" id="10116"/>
    <lineage>
        <taxon>Eukaryota</taxon>
        <taxon>Metazoa</taxon>
        <taxon>Chordata</taxon>
        <taxon>Craniata</taxon>
        <taxon>Vertebrata</taxon>
        <taxon>Euteleostomi</taxon>
        <taxon>Mammalia</taxon>
        <taxon>Eutheria</taxon>
        <taxon>Euarchontoglires</taxon>
        <taxon>Glires</taxon>
        <taxon>Rodentia</taxon>
        <taxon>Myomorpha</taxon>
        <taxon>Muroidea</taxon>
        <taxon>Muridae</taxon>
        <taxon>Murinae</taxon>
        <taxon>Rattus</taxon>
    </lineage>
</organism>
<accession>Q62737</accession>
<accession>Q9ER27</accession>
<protein>
    <recommendedName>
        <fullName evidence="6">Cytochrome b-245 light chain</fullName>
    </recommendedName>
    <alternativeName>
        <fullName>Cytochrome b(558) alpha chain</fullName>
    </alternativeName>
    <alternativeName>
        <fullName>Cytochrome b558 subunit alpha</fullName>
    </alternativeName>
    <alternativeName>
        <fullName>Neutrophil cytochrome b 22 kDa polypeptide</fullName>
    </alternativeName>
    <alternativeName>
        <fullName>Superoxide-generating NADPH oxidase light chain subunit</fullName>
    </alternativeName>
    <alternativeName>
        <fullName>p22 phagocyte B-cytochrome</fullName>
    </alternativeName>
    <alternativeName>
        <fullName>p22-phox</fullName>
        <shortName>p22phox</shortName>
    </alternativeName>
</protein>
<gene>
    <name evidence="7" type="primary">Cyba</name>
</gene>
<evidence type="ECO:0000250" key="1">
    <source>
        <dbReference type="UniProtKB" id="P13498"/>
    </source>
</evidence>
<evidence type="ECO:0000250" key="2">
    <source>
        <dbReference type="UniProtKB" id="Q61462"/>
    </source>
</evidence>
<evidence type="ECO:0000256" key="3">
    <source>
        <dbReference type="SAM" id="MobiDB-lite"/>
    </source>
</evidence>
<evidence type="ECO:0000269" key="4">
    <source>
    </source>
</evidence>
<evidence type="ECO:0000269" key="5">
    <source>
    </source>
</evidence>
<evidence type="ECO:0000305" key="6"/>
<evidence type="ECO:0000312" key="7">
    <source>
        <dbReference type="RGD" id="620573"/>
    </source>
</evidence>
<evidence type="ECO:0007744" key="8">
    <source>
    </source>
</evidence>
<feature type="initiator methionine" description="Removed" evidence="1">
    <location>
        <position position="1"/>
    </location>
</feature>
<feature type="chain" id="PRO_0000144911" description="Cytochrome b-245 light chain">
    <location>
        <begin position="2"/>
        <end position="192"/>
    </location>
</feature>
<feature type="topological domain" description="Cytoplasmic" evidence="1">
    <location>
        <begin position="2"/>
        <end position="7"/>
    </location>
</feature>
<feature type="transmembrane region" description="Helical" evidence="1">
    <location>
        <begin position="8"/>
        <end position="30"/>
    </location>
</feature>
<feature type="topological domain" description="Extracellular" evidence="1">
    <location>
        <begin position="31"/>
        <end position="35"/>
    </location>
</feature>
<feature type="transmembrane region" description="Helical" evidence="1">
    <location>
        <begin position="36"/>
        <end position="53"/>
    </location>
</feature>
<feature type="topological domain" description="Cytoplasmic" evidence="1 6">
    <location>
        <begin position="54"/>
        <end position="69"/>
    </location>
</feature>
<feature type="intramembrane region" evidence="1">
    <location>
        <begin position="70"/>
        <end position="80"/>
    </location>
</feature>
<feature type="topological domain" description="Cytoplasmic" evidence="1">
    <location>
        <begin position="81"/>
        <end position="86"/>
    </location>
</feature>
<feature type="transmembrane region" description="Helical" evidence="1">
    <location>
        <begin position="87"/>
        <end position="104"/>
    </location>
</feature>
<feature type="topological domain" description="Extracellular" evidence="1">
    <location>
        <position position="105"/>
    </location>
</feature>
<feature type="transmembrane region" description="Helical" evidence="1">
    <location>
        <begin position="106"/>
        <end position="126"/>
    </location>
</feature>
<feature type="topological domain" description="Cytoplasmic" evidence="1">
    <location>
        <begin position="127"/>
        <end position="192"/>
    </location>
</feature>
<feature type="region of interest" description="Disordered" evidence="3">
    <location>
        <begin position="134"/>
        <end position="192"/>
    </location>
</feature>
<feature type="modified residue" description="Phosphothreonine" evidence="1">
    <location>
        <position position="147"/>
    </location>
</feature>
<feature type="modified residue" description="Phosphoserine" evidence="8">
    <location>
        <position position="168"/>
    </location>
</feature>
<feature type="modified residue" description="Phosphoserine" evidence="8">
    <location>
        <position position="176"/>
    </location>
</feature>
<feature type="cross-link" description="Glycyl lysine isopeptide (Lys-Gly) (interchain with G-Cter in ubiquitin)" evidence="2">
    <location>
        <position position="149"/>
    </location>
</feature>
<keyword id="KW-1003">Cell membrane</keyword>
<keyword id="KW-0249">Electron transport</keyword>
<keyword id="KW-0349">Heme</keyword>
<keyword id="KW-0408">Iron</keyword>
<keyword id="KW-1017">Isopeptide bond</keyword>
<keyword id="KW-0472">Membrane</keyword>
<keyword id="KW-0479">Metal-binding</keyword>
<keyword id="KW-0521">NADP</keyword>
<keyword id="KW-0560">Oxidoreductase</keyword>
<keyword id="KW-0597">Phosphoprotein</keyword>
<keyword id="KW-1185">Reference proteome</keyword>
<keyword id="KW-0812">Transmembrane</keyword>
<keyword id="KW-1133">Transmembrane helix</keyword>
<keyword id="KW-0813">Transport</keyword>
<keyword id="KW-0832">Ubl conjugation</keyword>
<sequence length="192" mass="20750">MGQIEWAMWANEQALASGLILITGGIVATAGRFTQWYFGAYSIVAGVLICLLEYPRGKRKKGSTMERCGQKYLTAVVKLFGPLTRNYYVRAVLHLLLSVPAGFLLATILGTVCLAIASVIYLLAAIRGEQWTPIEPKPKERPQVGGTIKQPPTNPPPRPPAEVRKKPSEAEEEAASAGGPQVNPIPVTDEVV</sequence>
<name>CY24A_RAT</name>